<protein>
    <recommendedName>
        <fullName evidence="1">Non-structural protein 6</fullName>
        <shortName evidence="1">NSP6</shortName>
    </recommendedName>
</protein>
<sequence length="92" mass="11025">MNRLLQRRLFLENLLVGVNSTFHQMQKHSINTCCRSLQRILDHLILLQTIHSPAFRLDRMQLRQMRTLACLWIHRRNHDLQATLDAINWISP</sequence>
<name>NSP6_ROTHT</name>
<proteinExistence type="inferred from homology"/>
<keyword id="KW-1035">Host cytoplasm</keyword>
<keyword id="KW-1045">Host mitochondrion</keyword>
<feature type="chain" id="PRO_0000369521" description="Non-structural protein 6">
    <location>
        <begin position="1"/>
        <end position="92"/>
    </location>
</feature>
<accession>B3SRX4</accession>
<organism>
    <name type="scientific">Rotavirus A (strain RVA/Human/United Kingdom/ST3/1975/G4P2A[6])</name>
    <name type="common">RV-A</name>
    <name type="synonym">Rotavirus A (strain St. Thomas 3)</name>
    <dbReference type="NCBI Taxonomy" id="10960"/>
    <lineage>
        <taxon>Viruses</taxon>
        <taxon>Riboviria</taxon>
        <taxon>Orthornavirae</taxon>
        <taxon>Duplornaviricota</taxon>
        <taxon>Resentoviricetes</taxon>
        <taxon>Reovirales</taxon>
        <taxon>Sedoreoviridae</taxon>
        <taxon>Rotavirus</taxon>
        <taxon>Rotavirus A</taxon>
    </lineage>
</organism>
<evidence type="ECO:0000255" key="1">
    <source>
        <dbReference type="HAMAP-Rule" id="MF_04093"/>
    </source>
</evidence>
<organismHost>
    <name type="scientific">Homo sapiens</name>
    <name type="common">Human</name>
    <dbReference type="NCBI Taxonomy" id="9606"/>
</organismHost>
<reference key="1">
    <citation type="journal article" date="2008" name="J. Virol.">
        <title>Group A human rotavirus genomics: evidence that gene constellations are influenced by viral protein interactions.</title>
        <authorList>
            <person name="Heiman E.M."/>
            <person name="McDonald S.M."/>
            <person name="Barro M."/>
            <person name="Taraporewala Z.F."/>
            <person name="Bar-Magen T."/>
            <person name="Patton J.T."/>
        </authorList>
    </citation>
    <scope>NUCLEOTIDE SEQUENCE [GENOMIC RNA]</scope>
</reference>
<dbReference type="EMBL" id="EF672618">
    <property type="protein sequence ID" value="ABV53299.1"/>
    <property type="molecule type" value="Genomic_RNA"/>
</dbReference>
<dbReference type="Proteomes" id="UP000007048">
    <property type="component" value="Genome"/>
</dbReference>
<dbReference type="GO" id="GO:0033650">
    <property type="term" value="C:host cell mitochondrion"/>
    <property type="evidence" value="ECO:0007669"/>
    <property type="project" value="UniProtKB-SubCell"/>
</dbReference>
<dbReference type="HAMAP" id="MF_04093">
    <property type="entry name" value="ROTA_NSP6"/>
    <property type="match status" value="1"/>
</dbReference>
<dbReference type="InterPro" id="IPR006950">
    <property type="entry name" value="Rotavirus_NSP6"/>
</dbReference>
<dbReference type="Pfam" id="PF04866">
    <property type="entry name" value="Rota_NS6"/>
    <property type="match status" value="1"/>
</dbReference>
<comment type="subunit">
    <text evidence="1">Interacts with NSP2 and NSP5.</text>
</comment>
<comment type="subcellular location">
    <subcellularLocation>
        <location evidence="1">Host cytoplasm</location>
    </subcellularLocation>
    <subcellularLocation>
        <location evidence="1">Host mitochondrion</location>
    </subcellularLocation>
    <text evidence="1">Found in spherical cytoplasmic structures, called viral factories, that appear early after infection and are the site of viral replication and packaging.</text>
</comment>
<comment type="similarity">
    <text evidence="1">Belongs to the rotavirus A NSP6 family.</text>
</comment>